<comment type="function">
    <text evidence="4">Stress-response chaperone protein that prevents toxic aggregation of proteins.</text>
</comment>
<comment type="subunit">
    <text evidence="2">Forms a complex with Hsp83/Hsp90 and Dpit47.</text>
</comment>
<comment type="induction">
    <text evidence="4">Heat shock induces the synthesis of seven proteins at five otherwise inactive sites in the polytene chromosomes of fruit fly larvae. Two separate sites, producing two and three copies, respectively, code for the 70 kDa protein. Expression is induced by proteotoxic stress caused by toxic protein aggregation, for example by overexpressed Atx-1/ataxin-1 (PubMed:18344983).</text>
</comment>
<comment type="miscellaneous">
    <text evidence="5">There are 5 or 6 copies of the gene encoding this protein at two separate loci, 2 copies at chromosome locus 87A7 in reverse orientation (Hsp70Aa and Hsp70Ab) at locus 87A7, and 3 or 4 copies (depending on strain) at locus 87C1. Most strains have three copies at chromosome locus 87C1; two tandemly repeated Hsp70 genes (Hsp70Bb and Hsp70Bc) and one in reverse orientation (Hsp70Ba). Some strains, including that sequenced in the Drosophila genome project have an additional copy making three tandemly repeated Hsp70 genes (Hsp70Bb, Hsp70Bbb and Hsp70Bc).</text>
</comment>
<comment type="similarity">
    <text evidence="5">Belongs to the heat shock protein 70 family.</text>
</comment>
<comment type="sequence caution" evidence="5">
    <conflict type="erroneous gene model prediction">
        <sequence resource="EMBL-CDS" id="CAA23495"/>
    </conflict>
</comment>
<comment type="sequence caution" evidence="5">
    <conflict type="frameshift">
        <sequence resource="EMBL-CDS" id="CAA23495"/>
    </conflict>
</comment>
<comment type="sequence caution" evidence="5">
    <conflict type="erroneous gene model prediction">
        <sequence resource="EMBL-CDS" id="CAA23496"/>
    </conflict>
</comment>
<comment type="sequence caution" evidence="5">
    <conflict type="frameshift">
        <sequence resource="EMBL-CDS" id="CAA23496"/>
    </conflict>
</comment>
<keyword id="KW-0067">ATP-binding</keyword>
<keyword id="KW-0547">Nucleotide-binding</keyword>
<keyword id="KW-1185">Reference proteome</keyword>
<keyword id="KW-0346">Stress response</keyword>
<feature type="chain" id="PRO_0000078330" description="Major heat shock 70 kDa protein Ab">
    <location>
        <begin position="1"/>
        <end position="642"/>
    </location>
</feature>
<feature type="region of interest" description="Disordered" evidence="1">
    <location>
        <begin position="609"/>
        <end position="642"/>
    </location>
</feature>
<feature type="compositionally biased region" description="Gly residues" evidence="1">
    <location>
        <begin position="612"/>
        <end position="634"/>
    </location>
</feature>
<feature type="sequence variant" description="In strain: B28." evidence="3">
    <original>E</original>
    <variation>G</variation>
    <location>
        <position position="189"/>
    </location>
</feature>
<feature type="sequence variant" description="In strain: Z(H)1." evidence="3">
    <original>I</original>
    <variation>N</variation>
    <location>
        <position position="194"/>
    </location>
</feature>
<feature type="sequence variant" description="In strain: 122." evidence="3">
    <original>R</original>
    <variation>G</variation>
    <location>
        <position position="262"/>
    </location>
</feature>
<feature type="sequence variant" description="In strain: FrV3-1." evidence="3">
    <original>K</original>
    <variation>R</variation>
    <location>
        <position position="489"/>
    </location>
</feature>
<feature type="sequence variant" description="In strain: 56H8." evidence="3">
    <original>V</original>
    <variation>D</variation>
    <location>
        <position position="567"/>
    </location>
</feature>
<feature type="sequence variant" description="In strain: 122." evidence="3">
    <original>D</original>
    <variation>G</variation>
    <location>
        <position position="573"/>
    </location>
</feature>
<feature type="sequence variant" description="In strain: B28." evidence="3">
    <original>P</original>
    <variation>R</variation>
    <location>
        <position position="636"/>
    </location>
</feature>
<feature type="sequence conflict" description="In Ref. 1; AAA28640." evidence="5" ref="1">
    <original>D</original>
    <variation>E</variation>
    <location>
        <position position="50"/>
    </location>
</feature>
<feature type="sequence conflict" description="In Ref. 1; AAA28640 and 5; CAA23495." evidence="5" ref="1 5">
    <original>A</original>
    <variation>AA</variation>
    <location>
        <position position="128"/>
    </location>
</feature>
<feature type="sequence conflict" description="In Ref. 1; AAA28640 and 5; CAA23496." evidence="5" ref="1 5">
    <original>H</original>
    <variation>R</variation>
    <location>
        <position position="530"/>
    </location>
</feature>
<feature type="sequence conflict" description="In Ref. 1; AAA28640 and 5; CAA23496." evidence="5" ref="1 5">
    <original>I</original>
    <variation>V</variation>
    <location>
        <position position="534"/>
    </location>
</feature>
<feature type="sequence conflict" description="In Ref. 1; AAA28640 and 5; CAA23496." evidence="5" ref="1 5">
    <original>YVF</original>
    <variation>HVL</variation>
    <location>
        <begin position="543"/>
        <end position="545"/>
    </location>
</feature>
<accession>P02825</accession>
<accession>Q95NG7</accession>
<evidence type="ECO:0000256" key="1">
    <source>
        <dbReference type="SAM" id="MobiDB-lite"/>
    </source>
</evidence>
<evidence type="ECO:0000269" key="2">
    <source>
    </source>
</evidence>
<evidence type="ECO:0000269" key="3">
    <source>
    </source>
</evidence>
<evidence type="ECO:0000269" key="4">
    <source>
    </source>
</evidence>
<evidence type="ECO:0000305" key="5"/>
<name>HSP71_DROME</name>
<sequence length="642" mass="70160">MPAIGIDLGTTYSCVGVYQHGKVEIIANDQGNRTTPSYVAFTDSERLIGDPAKNQVAMNPRNTVFDAKRLIGRKYDDPKIAEDMKHWPFKVVSDGGKPKIGVEYKGESKRFAPEEISSMVLTKMKETAEAYLGESITDAVITVPAYFNDSQRQATKDAGHIAGLNVLRIINEPTAAALAYGLDKNLKGERNVLIFDLGGGTFDVSILTIDEGSLFEVRSTAGDTHLGGEDFDNRLVTHLADEFKRKYKKDLRSNPRALRRLRTAAERAKRTLSSSTEATIEIDALFEGQDFYTKVSRARFEELCADLFRNTLQPVEKALNDAKMDKGQIHDIVLVGGSTRIPKVQSLLQDFFHGKNLNLSINPDEAVAYGAAVQAAILSGDQSGKIQDVLLVDVAPLSLGIETAGGVMTKLIERNCRIPCKQTKTFSTYADNQPGVSIQVYEGERAMTKDNNALGTFDLSGIPPAPRGVPQIEVTFDLDANGILNVSAKEMSTGKAKNITIKNDKGRLSQAEIDRMVNEAEKYADEDEKHRQRITSRNALESYVFNVKQAVEQAPAGKLDEADKNSVLDKCNDTIRWLDSNTTAEKEEFDHKLEELTRHCSPIMTKMHQQGAGAGAGGPGANCGQQAGGFGGYSGPTVEEVD</sequence>
<gene>
    <name type="primary">Hsp70Ab</name>
    <name type="synonym">Hsp70A</name>
    <name type="ORF">CG18743</name>
</gene>
<proteinExistence type="evidence at protein level"/>
<organism>
    <name type="scientific">Drosophila melanogaster</name>
    <name type="common">Fruit fly</name>
    <dbReference type="NCBI Taxonomy" id="7227"/>
    <lineage>
        <taxon>Eukaryota</taxon>
        <taxon>Metazoa</taxon>
        <taxon>Ecdysozoa</taxon>
        <taxon>Arthropoda</taxon>
        <taxon>Hexapoda</taxon>
        <taxon>Insecta</taxon>
        <taxon>Pterygota</taxon>
        <taxon>Neoptera</taxon>
        <taxon>Endopterygota</taxon>
        <taxon>Diptera</taxon>
        <taxon>Brachycera</taxon>
        <taxon>Muscomorpha</taxon>
        <taxon>Ephydroidea</taxon>
        <taxon>Drosophilidae</taxon>
        <taxon>Drosophila</taxon>
        <taxon>Sophophora</taxon>
    </lineage>
</organism>
<dbReference type="EMBL" id="J01103">
    <property type="protein sequence ID" value="AAA28640.1"/>
    <property type="molecule type" value="Genomic_DNA"/>
</dbReference>
<dbReference type="EMBL" id="AF295939">
    <property type="protein sequence ID" value="AAG26893.1"/>
    <property type="molecule type" value="Genomic_DNA"/>
</dbReference>
<dbReference type="EMBL" id="AF295940">
    <property type="protein sequence ID" value="AAG26894.1"/>
    <property type="molecule type" value="Genomic_DNA"/>
</dbReference>
<dbReference type="EMBL" id="AF295941">
    <property type="protein sequence ID" value="AAG26895.1"/>
    <property type="molecule type" value="Genomic_DNA"/>
</dbReference>
<dbReference type="EMBL" id="AF295942">
    <property type="protein sequence ID" value="AAG26896.1"/>
    <property type="molecule type" value="Genomic_DNA"/>
</dbReference>
<dbReference type="EMBL" id="AF295943">
    <property type="protein sequence ID" value="AAG26897.1"/>
    <property type="molecule type" value="Genomic_DNA"/>
</dbReference>
<dbReference type="EMBL" id="AF295944">
    <property type="protein sequence ID" value="AAG26898.1"/>
    <property type="molecule type" value="Genomic_DNA"/>
</dbReference>
<dbReference type="EMBL" id="AF295945">
    <property type="protein sequence ID" value="AAG26899.1"/>
    <property type="molecule type" value="Genomic_DNA"/>
</dbReference>
<dbReference type="EMBL" id="AF350460">
    <property type="protein sequence ID" value="AAK30217.1"/>
    <property type="molecule type" value="Genomic_DNA"/>
</dbReference>
<dbReference type="EMBL" id="AF350461">
    <property type="protein sequence ID" value="AAK30218.1"/>
    <property type="molecule type" value="Genomic_DNA"/>
</dbReference>
<dbReference type="EMBL" id="AF350462">
    <property type="protein sequence ID" value="AAK30219.1"/>
    <property type="molecule type" value="Genomic_DNA"/>
</dbReference>
<dbReference type="EMBL" id="AF350463">
    <property type="protein sequence ID" value="AAK30220.1"/>
    <property type="molecule type" value="Genomic_DNA"/>
</dbReference>
<dbReference type="EMBL" id="AF350464">
    <property type="protein sequence ID" value="AAK30221.1"/>
    <property type="molecule type" value="Genomic_DNA"/>
</dbReference>
<dbReference type="EMBL" id="AF350465">
    <property type="protein sequence ID" value="AAK30222.1"/>
    <property type="molecule type" value="Genomic_DNA"/>
</dbReference>
<dbReference type="EMBL" id="AF350466">
    <property type="protein sequence ID" value="AAK30223.1"/>
    <property type="molecule type" value="Genomic_DNA"/>
</dbReference>
<dbReference type="EMBL" id="AF350467">
    <property type="protein sequence ID" value="AAK30224.1"/>
    <property type="molecule type" value="Genomic_DNA"/>
</dbReference>
<dbReference type="EMBL" id="AE014297">
    <property type="protein sequence ID" value="AAG22148.2"/>
    <property type="molecule type" value="Genomic_DNA"/>
</dbReference>
<dbReference type="EMBL" id="V00213">
    <property type="protein sequence ID" value="CAA23495.1"/>
    <property type="status" value="ALT_SEQ"/>
    <property type="molecule type" value="Genomic_DNA"/>
</dbReference>
<dbReference type="EMBL" id="V00214">
    <property type="protein sequence ID" value="CAA23496.1"/>
    <property type="status" value="ALT_SEQ"/>
    <property type="molecule type" value="Genomic_DNA"/>
</dbReference>
<dbReference type="PIR" id="A03308">
    <property type="entry name" value="A03308"/>
</dbReference>
<dbReference type="RefSeq" id="NP_524798.2">
    <property type="nucleotide sequence ID" value="NM_080059.3"/>
</dbReference>
<dbReference type="SMR" id="P02825"/>
<dbReference type="BioGRID" id="69381">
    <property type="interactions" value="50"/>
</dbReference>
<dbReference type="BioGRID" id="71511">
    <property type="interactions" value="63"/>
</dbReference>
<dbReference type="FunCoup" id="P02825">
    <property type="interactions" value="363"/>
</dbReference>
<dbReference type="IntAct" id="P02825">
    <property type="interactions" value="16"/>
</dbReference>
<dbReference type="GlyGen" id="P02825">
    <property type="glycosylation" value="1 site"/>
</dbReference>
<dbReference type="DNASU" id="48581"/>
<dbReference type="EnsemblMetazoa" id="FBtr0082482">
    <property type="protein sequence ID" value="FBpp0081956"/>
    <property type="gene ID" value="FBgn0013276"/>
</dbReference>
<dbReference type="EnsemblMetazoa" id="FBtr0082512">
    <property type="protein sequence ID" value="FBpp0081986"/>
    <property type="gene ID" value="FBgn0013275"/>
</dbReference>
<dbReference type="GeneID" id="44920"/>
<dbReference type="GeneID" id="48581"/>
<dbReference type="KEGG" id="dme:Dmel_CG18743"/>
<dbReference type="KEGG" id="dme:Dmel_CG31366"/>
<dbReference type="AGR" id="FB:FBgn0013276"/>
<dbReference type="CTD" id="44920"/>
<dbReference type="CTD" id="48581"/>
<dbReference type="FlyBase" id="FBgn0013276">
    <property type="gene designation" value="Hsp70Ab"/>
</dbReference>
<dbReference type="VEuPathDB" id="VectorBase:FBgn0013275"/>
<dbReference type="VEuPathDB" id="VectorBase:FBgn0013276"/>
<dbReference type="HOGENOM" id="CLU_005965_3_0_1"/>
<dbReference type="InParanoid" id="P02825"/>
<dbReference type="OMA" id="QADKSHW"/>
<dbReference type="OrthoDB" id="7877850at2759"/>
<dbReference type="PhylomeDB" id="P02825"/>
<dbReference type="Reactome" id="R-DME-3371497">
    <property type="pathway name" value="HSP90 chaperone cycle for steroid hormone receptors (SHR) in the presence of ligand"/>
</dbReference>
<dbReference type="SignaLink" id="P02825"/>
<dbReference type="PRO" id="PR:P02825"/>
<dbReference type="Proteomes" id="UP000000803">
    <property type="component" value="Chromosome 3R"/>
</dbReference>
<dbReference type="Bgee" id="FBgn0013275">
    <property type="expression patterns" value="Expressed in T neuron T4a (Drosophila) in embryonic/larval optic lobe (Drosophila) and 216 other cell types or tissues"/>
</dbReference>
<dbReference type="ExpressionAtlas" id="P02825">
    <property type="expression patterns" value="baseline and differential"/>
</dbReference>
<dbReference type="GO" id="GO:0005737">
    <property type="term" value="C:cytoplasm"/>
    <property type="evidence" value="ECO:0000318"/>
    <property type="project" value="GO_Central"/>
</dbReference>
<dbReference type="GO" id="GO:0005829">
    <property type="term" value="C:cytosol"/>
    <property type="evidence" value="ECO:0000318"/>
    <property type="project" value="GO_Central"/>
</dbReference>
<dbReference type="GO" id="GO:0005634">
    <property type="term" value="C:nucleus"/>
    <property type="evidence" value="ECO:0000318"/>
    <property type="project" value="GO_Central"/>
</dbReference>
<dbReference type="GO" id="GO:0005886">
    <property type="term" value="C:plasma membrane"/>
    <property type="evidence" value="ECO:0000318"/>
    <property type="project" value="GO_Central"/>
</dbReference>
<dbReference type="GO" id="GO:0005524">
    <property type="term" value="F:ATP binding"/>
    <property type="evidence" value="ECO:0007669"/>
    <property type="project" value="UniProtKB-KW"/>
</dbReference>
<dbReference type="GO" id="GO:0016887">
    <property type="term" value="F:ATP hydrolysis activity"/>
    <property type="evidence" value="ECO:0000318"/>
    <property type="project" value="GO_Central"/>
</dbReference>
<dbReference type="GO" id="GO:0140662">
    <property type="term" value="F:ATP-dependent protein folding chaperone"/>
    <property type="evidence" value="ECO:0007669"/>
    <property type="project" value="InterPro"/>
</dbReference>
<dbReference type="GO" id="GO:0031072">
    <property type="term" value="F:heat shock protein binding"/>
    <property type="evidence" value="ECO:0000318"/>
    <property type="project" value="GO_Central"/>
</dbReference>
<dbReference type="GO" id="GO:0044183">
    <property type="term" value="F:protein folding chaperone"/>
    <property type="evidence" value="ECO:0000318"/>
    <property type="project" value="GO_Central"/>
</dbReference>
<dbReference type="GO" id="GO:0051085">
    <property type="term" value="P:chaperone cofactor-dependent protein refolding"/>
    <property type="evidence" value="ECO:0000318"/>
    <property type="project" value="GO_Central"/>
</dbReference>
<dbReference type="GO" id="GO:0035080">
    <property type="term" value="P:heat shock-mediated polytene chromosome puffing"/>
    <property type="evidence" value="ECO:0000315"/>
    <property type="project" value="FlyBase"/>
</dbReference>
<dbReference type="GO" id="GO:0042026">
    <property type="term" value="P:protein refolding"/>
    <property type="evidence" value="ECO:0000318"/>
    <property type="project" value="GO_Central"/>
</dbReference>
<dbReference type="GO" id="GO:0009408">
    <property type="term" value="P:response to heat"/>
    <property type="evidence" value="ECO:0000315"/>
    <property type="project" value="FlyBase"/>
</dbReference>
<dbReference type="GO" id="GO:0001666">
    <property type="term" value="P:response to hypoxia"/>
    <property type="evidence" value="ECO:0000315"/>
    <property type="project" value="FlyBase"/>
</dbReference>
<dbReference type="GO" id="GO:0006986">
    <property type="term" value="P:response to unfolded protein"/>
    <property type="evidence" value="ECO:0000303"/>
    <property type="project" value="UniProtKB"/>
</dbReference>
<dbReference type="CDD" id="cd10233">
    <property type="entry name" value="ASKHA_NBD_HSP70_HSPA1"/>
    <property type="match status" value="1"/>
</dbReference>
<dbReference type="FunFam" id="2.60.34.10:FF:000002">
    <property type="entry name" value="Heat shock 70 kDa"/>
    <property type="match status" value="1"/>
</dbReference>
<dbReference type="FunFam" id="3.90.640.10:FF:000002">
    <property type="entry name" value="Heat shock 70 kDa"/>
    <property type="match status" value="1"/>
</dbReference>
<dbReference type="FunFam" id="3.30.420.40:FF:000172">
    <property type="entry name" value="Heat shock 70 kDa protein"/>
    <property type="match status" value="1"/>
</dbReference>
<dbReference type="FunFam" id="3.30.30.30:FF:000001">
    <property type="entry name" value="heat shock 70 kDa protein-like"/>
    <property type="match status" value="1"/>
</dbReference>
<dbReference type="FunFam" id="1.20.1270.10:FF:000024">
    <property type="entry name" value="Heat shock protein 70"/>
    <property type="match status" value="1"/>
</dbReference>
<dbReference type="FunFam" id="3.30.420.40:FF:000026">
    <property type="entry name" value="Heat shock protein 70"/>
    <property type="match status" value="1"/>
</dbReference>
<dbReference type="Gene3D" id="1.20.1270.10">
    <property type="match status" value="1"/>
</dbReference>
<dbReference type="Gene3D" id="3.30.30.30">
    <property type="match status" value="1"/>
</dbReference>
<dbReference type="Gene3D" id="3.30.420.40">
    <property type="match status" value="2"/>
</dbReference>
<dbReference type="Gene3D" id="3.90.640.10">
    <property type="entry name" value="Actin, Chain A, domain 4"/>
    <property type="match status" value="1"/>
</dbReference>
<dbReference type="Gene3D" id="2.60.34.10">
    <property type="entry name" value="Substrate Binding Domain Of DNAk, Chain A, domain 1"/>
    <property type="match status" value="1"/>
</dbReference>
<dbReference type="InterPro" id="IPR043129">
    <property type="entry name" value="ATPase_NBD"/>
</dbReference>
<dbReference type="InterPro" id="IPR018181">
    <property type="entry name" value="Heat_shock_70_CS"/>
</dbReference>
<dbReference type="InterPro" id="IPR029048">
    <property type="entry name" value="HSP70_C_sf"/>
</dbReference>
<dbReference type="InterPro" id="IPR029047">
    <property type="entry name" value="HSP70_peptide-bd_sf"/>
</dbReference>
<dbReference type="InterPro" id="IPR013126">
    <property type="entry name" value="Hsp_70_fam"/>
</dbReference>
<dbReference type="NCBIfam" id="NF001413">
    <property type="entry name" value="PRK00290.1"/>
    <property type="match status" value="1"/>
</dbReference>
<dbReference type="PANTHER" id="PTHR19375">
    <property type="entry name" value="HEAT SHOCK PROTEIN 70KDA"/>
    <property type="match status" value="1"/>
</dbReference>
<dbReference type="Pfam" id="PF00012">
    <property type="entry name" value="HSP70"/>
    <property type="match status" value="1"/>
</dbReference>
<dbReference type="PRINTS" id="PR00301">
    <property type="entry name" value="HEATSHOCK70"/>
</dbReference>
<dbReference type="SUPFAM" id="SSF53067">
    <property type="entry name" value="Actin-like ATPase domain"/>
    <property type="match status" value="2"/>
</dbReference>
<dbReference type="SUPFAM" id="SSF100934">
    <property type="entry name" value="Heat shock protein 70kD (HSP70), C-terminal subdomain"/>
    <property type="match status" value="1"/>
</dbReference>
<dbReference type="SUPFAM" id="SSF100920">
    <property type="entry name" value="Heat shock protein 70kD (HSP70), peptide-binding domain"/>
    <property type="match status" value="1"/>
</dbReference>
<dbReference type="PROSITE" id="PS00297">
    <property type="entry name" value="HSP70_1"/>
    <property type="match status" value="1"/>
</dbReference>
<dbReference type="PROSITE" id="PS00329">
    <property type="entry name" value="HSP70_2"/>
    <property type="match status" value="1"/>
</dbReference>
<dbReference type="PROSITE" id="PS01036">
    <property type="entry name" value="HSP70_3"/>
    <property type="match status" value="1"/>
</dbReference>
<reference key="1">
    <citation type="journal article" date="1981" name="J. Mol. Biol.">
        <title>Extensive regions of homology in front of the two hsp70 heat shock variant genes in Drosophila melanogaster.</title>
        <authorList>
            <person name="Karch F."/>
            <person name="Toeroek I."/>
            <person name="Tissieres A."/>
        </authorList>
    </citation>
    <scope>NUCLEOTIDE SEQUENCE [GENOMIC DNA]</scope>
</reference>
<reference key="2">
    <citation type="journal article" date="2002" name="J. Mol. Evol.">
        <title>Rapid concerted evolution via gene conversion at the Drosophila hsp70 genes.</title>
        <authorList>
            <person name="Bettencourt B.R."/>
            <person name="Feder M.E."/>
        </authorList>
    </citation>
    <scope>NUCLEOTIDE SEQUENCE [GENOMIC DNA]</scope>
    <scope>VARIANTS GLY-189; ASN-194; GLY-262; ARG-489; ASP-567; GLY-573 AND ARG-636</scope>
    <source>
        <strain>122</strain>
        <strain>3CPA126</strain>
        <strain>3CPA2</strain>
        <strain>3CPA35</strain>
        <strain>3CPA43</strain>
        <strain>3CPA47</strain>
        <strain>3CPA61</strain>
        <strain>3CPA81</strain>
        <strain>3CPA86</strain>
        <strain>56H8</strain>
        <strain>AUS</strain>
        <strain>B28</strain>
        <strain>FrV3-1</strain>
        <strain>QD18</strain>
        <strain>Z(H)1</strain>
    </source>
</reference>
<reference key="3">
    <citation type="journal article" date="2000" name="Science">
        <title>The genome sequence of Drosophila melanogaster.</title>
        <authorList>
            <person name="Adams M.D."/>
            <person name="Celniker S.E."/>
            <person name="Holt R.A."/>
            <person name="Evans C.A."/>
            <person name="Gocayne J.D."/>
            <person name="Amanatides P.G."/>
            <person name="Scherer S.E."/>
            <person name="Li P.W."/>
            <person name="Hoskins R.A."/>
            <person name="Galle R.F."/>
            <person name="George R.A."/>
            <person name="Lewis S.E."/>
            <person name="Richards S."/>
            <person name="Ashburner M."/>
            <person name="Henderson S.N."/>
            <person name="Sutton G.G."/>
            <person name="Wortman J.R."/>
            <person name="Yandell M.D."/>
            <person name="Zhang Q."/>
            <person name="Chen L.X."/>
            <person name="Brandon R.C."/>
            <person name="Rogers Y.-H.C."/>
            <person name="Blazej R.G."/>
            <person name="Champe M."/>
            <person name="Pfeiffer B.D."/>
            <person name="Wan K.H."/>
            <person name="Doyle C."/>
            <person name="Baxter E.G."/>
            <person name="Helt G."/>
            <person name="Nelson C.R."/>
            <person name="Miklos G.L.G."/>
            <person name="Abril J.F."/>
            <person name="Agbayani A."/>
            <person name="An H.-J."/>
            <person name="Andrews-Pfannkoch C."/>
            <person name="Baldwin D."/>
            <person name="Ballew R.M."/>
            <person name="Basu A."/>
            <person name="Baxendale J."/>
            <person name="Bayraktaroglu L."/>
            <person name="Beasley E.M."/>
            <person name="Beeson K.Y."/>
            <person name="Benos P.V."/>
            <person name="Berman B.P."/>
            <person name="Bhandari D."/>
            <person name="Bolshakov S."/>
            <person name="Borkova D."/>
            <person name="Botchan M.R."/>
            <person name="Bouck J."/>
            <person name="Brokstein P."/>
            <person name="Brottier P."/>
            <person name="Burtis K.C."/>
            <person name="Busam D.A."/>
            <person name="Butler H."/>
            <person name="Cadieu E."/>
            <person name="Center A."/>
            <person name="Chandra I."/>
            <person name="Cherry J.M."/>
            <person name="Cawley S."/>
            <person name="Dahlke C."/>
            <person name="Davenport L.B."/>
            <person name="Davies P."/>
            <person name="de Pablos B."/>
            <person name="Delcher A."/>
            <person name="Deng Z."/>
            <person name="Mays A.D."/>
            <person name="Dew I."/>
            <person name="Dietz S.M."/>
            <person name="Dodson K."/>
            <person name="Doup L.E."/>
            <person name="Downes M."/>
            <person name="Dugan-Rocha S."/>
            <person name="Dunkov B.C."/>
            <person name="Dunn P."/>
            <person name="Durbin K.J."/>
            <person name="Evangelista C.C."/>
            <person name="Ferraz C."/>
            <person name="Ferriera S."/>
            <person name="Fleischmann W."/>
            <person name="Fosler C."/>
            <person name="Gabrielian A.E."/>
            <person name="Garg N.S."/>
            <person name="Gelbart W.M."/>
            <person name="Glasser K."/>
            <person name="Glodek A."/>
            <person name="Gong F."/>
            <person name="Gorrell J.H."/>
            <person name="Gu Z."/>
            <person name="Guan P."/>
            <person name="Harris M."/>
            <person name="Harris N.L."/>
            <person name="Harvey D.A."/>
            <person name="Heiman T.J."/>
            <person name="Hernandez J.R."/>
            <person name="Houck J."/>
            <person name="Hostin D."/>
            <person name="Houston K.A."/>
            <person name="Howland T.J."/>
            <person name="Wei M.-H."/>
            <person name="Ibegwam C."/>
            <person name="Jalali M."/>
            <person name="Kalush F."/>
            <person name="Karpen G.H."/>
            <person name="Ke Z."/>
            <person name="Kennison J.A."/>
            <person name="Ketchum K.A."/>
            <person name="Kimmel B.E."/>
            <person name="Kodira C.D."/>
            <person name="Kraft C.L."/>
            <person name="Kravitz S."/>
            <person name="Kulp D."/>
            <person name="Lai Z."/>
            <person name="Lasko P."/>
            <person name="Lei Y."/>
            <person name="Levitsky A.A."/>
            <person name="Li J.H."/>
            <person name="Li Z."/>
            <person name="Liang Y."/>
            <person name="Lin X."/>
            <person name="Liu X."/>
            <person name="Mattei B."/>
            <person name="McIntosh T.C."/>
            <person name="McLeod M.P."/>
            <person name="McPherson D."/>
            <person name="Merkulov G."/>
            <person name="Milshina N.V."/>
            <person name="Mobarry C."/>
            <person name="Morris J."/>
            <person name="Moshrefi A."/>
            <person name="Mount S.M."/>
            <person name="Moy M."/>
            <person name="Murphy B."/>
            <person name="Murphy L."/>
            <person name="Muzny D.M."/>
            <person name="Nelson D.L."/>
            <person name="Nelson D.R."/>
            <person name="Nelson K.A."/>
            <person name="Nixon K."/>
            <person name="Nusskern D.R."/>
            <person name="Pacleb J.M."/>
            <person name="Palazzolo M."/>
            <person name="Pittman G.S."/>
            <person name="Pan S."/>
            <person name="Pollard J."/>
            <person name="Puri V."/>
            <person name="Reese M.G."/>
            <person name="Reinert K."/>
            <person name="Remington K."/>
            <person name="Saunders R.D.C."/>
            <person name="Scheeler F."/>
            <person name="Shen H."/>
            <person name="Shue B.C."/>
            <person name="Siden-Kiamos I."/>
            <person name="Simpson M."/>
            <person name="Skupski M.P."/>
            <person name="Smith T.J."/>
            <person name="Spier E."/>
            <person name="Spradling A.C."/>
            <person name="Stapleton M."/>
            <person name="Strong R."/>
            <person name="Sun E."/>
            <person name="Svirskas R."/>
            <person name="Tector C."/>
            <person name="Turner R."/>
            <person name="Venter E."/>
            <person name="Wang A.H."/>
            <person name="Wang X."/>
            <person name="Wang Z.-Y."/>
            <person name="Wassarman D.A."/>
            <person name="Weinstock G.M."/>
            <person name="Weissenbach J."/>
            <person name="Williams S.M."/>
            <person name="Woodage T."/>
            <person name="Worley K.C."/>
            <person name="Wu D."/>
            <person name="Yang S."/>
            <person name="Yao Q.A."/>
            <person name="Ye J."/>
            <person name="Yeh R.-F."/>
            <person name="Zaveri J.S."/>
            <person name="Zhan M."/>
            <person name="Zhang G."/>
            <person name="Zhao Q."/>
            <person name="Zheng L."/>
            <person name="Zheng X.H."/>
            <person name="Zhong F.N."/>
            <person name="Zhong W."/>
            <person name="Zhou X."/>
            <person name="Zhu S.C."/>
            <person name="Zhu X."/>
            <person name="Smith H.O."/>
            <person name="Gibbs R.A."/>
            <person name="Myers E.W."/>
            <person name="Rubin G.M."/>
            <person name="Venter J.C."/>
        </authorList>
    </citation>
    <scope>NUCLEOTIDE SEQUENCE [LARGE SCALE GENOMIC DNA]</scope>
    <source>
        <strain>Berkeley</strain>
    </source>
</reference>
<reference key="4">
    <citation type="journal article" date="2002" name="Genome Biol.">
        <title>Annotation of the Drosophila melanogaster euchromatic genome: a systematic review.</title>
        <authorList>
            <person name="Misra S."/>
            <person name="Crosby M.A."/>
            <person name="Mungall C.J."/>
            <person name="Matthews B.B."/>
            <person name="Campbell K.S."/>
            <person name="Hradecky P."/>
            <person name="Huang Y."/>
            <person name="Kaminker J.S."/>
            <person name="Millburn G.H."/>
            <person name="Prochnik S.E."/>
            <person name="Smith C.D."/>
            <person name="Tupy J.L."/>
            <person name="Whitfield E.J."/>
            <person name="Bayraktaroglu L."/>
            <person name="Berman B.P."/>
            <person name="Bettencourt B.R."/>
            <person name="Celniker S.E."/>
            <person name="de Grey A.D.N.J."/>
            <person name="Drysdale R.A."/>
            <person name="Harris N.L."/>
            <person name="Richter J."/>
            <person name="Russo S."/>
            <person name="Schroeder A.J."/>
            <person name="Shu S.Q."/>
            <person name="Stapleton M."/>
            <person name="Yamada C."/>
            <person name="Ashburner M."/>
            <person name="Gelbart W.M."/>
            <person name="Rubin G.M."/>
            <person name="Lewis S.E."/>
        </authorList>
    </citation>
    <scope>GENOME REANNOTATION</scope>
    <source>
        <strain>Berkeley</strain>
    </source>
</reference>
<reference key="5">
    <citation type="journal article" date="1980" name="Nucleic Acids Res.">
        <title>Nucleotide sequences of heat shock activated genes in Drosophila melanogaster. I. Sequences in the regions of the 5' and 3' ends of the hsp 70 gene in the hybrid plasmid 56H8.</title>
        <authorList>
            <person name="Toeroek I."/>
            <person name="Karch F."/>
        </authorList>
    </citation>
    <scope>NUCLEOTIDE SEQUENCE [GENOMIC DNA] OF 1-135 AND 445-642</scope>
</reference>
<reference key="6">
    <citation type="journal article" date="1982" name="Proc. Natl. Acad. Sci. U.S.A.">
        <title>Drosophila gene related to the major heat shock-induced gene is transcribed at normal temperatures and not induced by heat shock.</title>
        <authorList>
            <person name="Ingolia T.D."/>
            <person name="Craig E.A."/>
        </authorList>
    </citation>
    <scope>NUCLEOTIDE SEQUENCE [GENOMIC DNA] OF 1-100</scope>
</reference>
<reference key="7">
    <citation type="journal article" date="2001" name="J. Cell Sci.">
        <title>The Drosophila Dpit47 protein is a nuclear Hsp90 co-chaperone that interacts with DNA polymerase alpha.</title>
        <authorList>
            <person name="Crevel G."/>
            <person name="Bates H."/>
            <person name="Huikeshoven H."/>
            <person name="Cotterill S."/>
        </authorList>
    </citation>
    <scope>INTERACTION WITH DPIT47 AND HSP83</scope>
</reference>
<reference key="8">
    <citation type="journal article" date="2008" name="Nature">
        <title>NAD synthase NMNAT acts as a chaperone to protect against neurodegeneration.</title>
        <authorList>
            <person name="Zhai R.G."/>
            <person name="Zhang F."/>
            <person name="Hiesinger P.R."/>
            <person name="Cao Y."/>
            <person name="Haueter C.M."/>
            <person name="Bellen H.J."/>
        </authorList>
    </citation>
    <scope>FUNCTION</scope>
    <scope>INDUCTION BY PROTEOTOXIC STRESS</scope>
</reference>
<protein>
    <recommendedName>
        <fullName>Major heat shock 70 kDa protein Ab</fullName>
        <shortName>Heat shock protein 70Ab</shortName>
    </recommendedName>
    <alternativeName>
        <fullName>HSP70-87A7</fullName>
    </alternativeName>
</protein>